<keyword id="KW-0249">Electron transport</keyword>
<keyword id="KW-0349">Heme</keyword>
<keyword id="KW-0408">Iron</keyword>
<keyword id="KW-0472">Membrane</keyword>
<keyword id="KW-0479">Metal-binding</keyword>
<keyword id="KW-0496">Mitochondrion</keyword>
<keyword id="KW-0999">Mitochondrion inner membrane</keyword>
<keyword id="KW-0679">Respiratory chain</keyword>
<keyword id="KW-0812">Transmembrane</keyword>
<keyword id="KW-1133">Transmembrane helix</keyword>
<keyword id="KW-0813">Transport</keyword>
<keyword id="KW-0830">Ubiquinone</keyword>
<gene>
    <name type="primary">MT-CYB</name>
    <name type="synonym">COB</name>
    <name type="synonym">CYTB</name>
    <name type="synonym">MTCYB</name>
</gene>
<geneLocation type="mitochondrion"/>
<evidence type="ECO:0000250" key="1"/>
<evidence type="ECO:0000250" key="2">
    <source>
        <dbReference type="UniProtKB" id="P00157"/>
    </source>
</evidence>
<evidence type="ECO:0000255" key="3">
    <source>
        <dbReference type="PROSITE-ProRule" id="PRU00967"/>
    </source>
</evidence>
<evidence type="ECO:0000255" key="4">
    <source>
        <dbReference type="PROSITE-ProRule" id="PRU00968"/>
    </source>
</evidence>
<sequence>MTNIRKNHPLLKIANNSLIDLPTPPNISSLWNFGSLLGACLIIQVITGLFLAMHYTADTTTAFSSVTHICRDVSYGWMIRYLHANGASMFFLCLFIHVGRGLYYGSFTLLETWNVGIILLFSVMATAFMGYVLPWGQMSFWGATVITNLLSAIPYIGTDLVEWIWGGFSVSKATLTRFFALHFILPFIISAWVMIHLLFLHETGSNNPLGMSSNSDKIPFHPYYTTKDFLGLLLLILLLMTLALFYPDLLGDPDNYTPANPLNTPSHIKPEWYFLFAYAILRSIPNKLGGVVALILSILILMIIPFLQPNKQQTMMFRPLSQFLFWILVADLLTLTWIGGQPVEDPFISIGQTASMLYFSLMIFIMPMTCLIENKMLKW</sequence>
<proteinExistence type="inferred from homology"/>
<accession>Q20FQ1</accession>
<feature type="chain" id="PRO_0000254810" description="Cytochrome b">
    <location>
        <begin position="1"/>
        <end position="379"/>
    </location>
</feature>
<feature type="transmembrane region" description="Helical" evidence="2">
    <location>
        <begin position="33"/>
        <end position="53"/>
    </location>
</feature>
<feature type="transmembrane region" description="Helical" evidence="2">
    <location>
        <begin position="77"/>
        <end position="98"/>
    </location>
</feature>
<feature type="transmembrane region" description="Helical" evidence="2">
    <location>
        <begin position="113"/>
        <end position="133"/>
    </location>
</feature>
<feature type="transmembrane region" description="Helical" evidence="2">
    <location>
        <begin position="178"/>
        <end position="198"/>
    </location>
</feature>
<feature type="transmembrane region" description="Helical" evidence="2">
    <location>
        <begin position="226"/>
        <end position="246"/>
    </location>
</feature>
<feature type="transmembrane region" description="Helical" evidence="2">
    <location>
        <begin position="288"/>
        <end position="308"/>
    </location>
</feature>
<feature type="transmembrane region" description="Helical" evidence="2">
    <location>
        <begin position="320"/>
        <end position="340"/>
    </location>
</feature>
<feature type="transmembrane region" description="Helical" evidence="2">
    <location>
        <begin position="347"/>
        <end position="367"/>
    </location>
</feature>
<feature type="binding site" description="axial binding residue" evidence="2">
    <location>
        <position position="83"/>
    </location>
    <ligand>
        <name>heme b</name>
        <dbReference type="ChEBI" id="CHEBI:60344"/>
        <label>b562</label>
    </ligand>
    <ligandPart>
        <name>Fe</name>
        <dbReference type="ChEBI" id="CHEBI:18248"/>
    </ligandPart>
</feature>
<feature type="binding site" description="axial binding residue" evidence="2">
    <location>
        <position position="97"/>
    </location>
    <ligand>
        <name>heme b</name>
        <dbReference type="ChEBI" id="CHEBI:60344"/>
        <label>b566</label>
    </ligand>
    <ligandPart>
        <name>Fe</name>
        <dbReference type="ChEBI" id="CHEBI:18248"/>
    </ligandPart>
</feature>
<feature type="binding site" description="axial binding residue" evidence="2">
    <location>
        <position position="182"/>
    </location>
    <ligand>
        <name>heme b</name>
        <dbReference type="ChEBI" id="CHEBI:60344"/>
        <label>b562</label>
    </ligand>
    <ligandPart>
        <name>Fe</name>
        <dbReference type="ChEBI" id="CHEBI:18248"/>
    </ligandPart>
</feature>
<feature type="binding site" description="axial binding residue" evidence="2">
    <location>
        <position position="196"/>
    </location>
    <ligand>
        <name>heme b</name>
        <dbReference type="ChEBI" id="CHEBI:60344"/>
        <label>b566</label>
    </ligand>
    <ligandPart>
        <name>Fe</name>
        <dbReference type="ChEBI" id="CHEBI:18248"/>
    </ligandPart>
</feature>
<feature type="binding site" evidence="2">
    <location>
        <position position="201"/>
    </location>
    <ligand>
        <name>a ubiquinone</name>
        <dbReference type="ChEBI" id="CHEBI:16389"/>
    </ligand>
</feature>
<name>CYB_LEPST</name>
<reference key="1">
    <citation type="journal article" date="2006" name="BMC Evol. Biol.">
        <title>Molecular phylogeny and taxonomic revision of the sportive lemurs (Lepilemur, Primates).</title>
        <authorList>
            <person name="Andriaholinirina N."/>
            <person name="Fausser J.-L."/>
            <person name="Roos C."/>
            <person name="Zinner D."/>
            <person name="Thalmann U."/>
            <person name="Rabarivola C."/>
            <person name="Ravoarimanana I."/>
            <person name="Ganzhorn J.U."/>
            <person name="Meier B."/>
            <person name="Hilgartner R."/>
            <person name="Walter L."/>
            <person name="Zaramody A."/>
            <person name="Langer C."/>
            <person name="Hahn T."/>
            <person name="Zimmermann E."/>
            <person name="Radespiel U."/>
            <person name="Craul M."/>
            <person name="Tomiuk J."/>
            <person name="Tattersall I."/>
            <person name="Rumpler Y."/>
        </authorList>
    </citation>
    <scope>NUCLEOTIDE SEQUENCE [GENOMIC DNA]</scope>
</reference>
<comment type="function">
    <text evidence="2">Component of the ubiquinol-cytochrome c reductase complex (complex III or cytochrome b-c1 complex) that is part of the mitochondrial respiratory chain. The b-c1 complex mediates electron transfer from ubiquinol to cytochrome c. Contributes to the generation of a proton gradient across the mitochondrial membrane that is then used for ATP synthesis.</text>
</comment>
<comment type="cofactor">
    <cofactor evidence="2">
        <name>heme b</name>
        <dbReference type="ChEBI" id="CHEBI:60344"/>
    </cofactor>
    <text evidence="2">Binds 2 heme b groups non-covalently.</text>
</comment>
<comment type="subunit">
    <text evidence="2">The cytochrome bc1 complex contains 11 subunits: 3 respiratory subunits (MT-CYB, CYC1 and UQCRFS1), 2 core proteins (UQCRC1 and UQCRC2) and 6 low-molecular weight proteins (UQCRH/QCR6, UQCRB/QCR7, UQCRQ/QCR8, UQCR10/QCR9, UQCR11/QCR10 and a cleavage product of UQCRFS1). This cytochrome bc1 complex then forms a dimer.</text>
</comment>
<comment type="subcellular location">
    <subcellularLocation>
        <location evidence="2">Mitochondrion inner membrane</location>
        <topology evidence="2">Multi-pass membrane protein</topology>
    </subcellularLocation>
</comment>
<comment type="miscellaneous">
    <text evidence="1">Heme 1 (or BL or b562) is low-potential and absorbs at about 562 nm, and heme 2 (or BH or b566) is high-potential and absorbs at about 566 nm.</text>
</comment>
<comment type="similarity">
    <text evidence="3 4">Belongs to the cytochrome b family.</text>
</comment>
<comment type="caution">
    <text evidence="2">The full-length protein contains only eight transmembrane helices, not nine as predicted by bioinformatics tools.</text>
</comment>
<dbReference type="EMBL" id="DQ234900">
    <property type="protein sequence ID" value="ABB80449.1"/>
    <property type="molecule type" value="Genomic_DNA"/>
</dbReference>
<dbReference type="SMR" id="Q20FQ1"/>
<dbReference type="GO" id="GO:0005743">
    <property type="term" value="C:mitochondrial inner membrane"/>
    <property type="evidence" value="ECO:0007669"/>
    <property type="project" value="UniProtKB-SubCell"/>
</dbReference>
<dbReference type="GO" id="GO:0045275">
    <property type="term" value="C:respiratory chain complex III"/>
    <property type="evidence" value="ECO:0007669"/>
    <property type="project" value="InterPro"/>
</dbReference>
<dbReference type="GO" id="GO:0046872">
    <property type="term" value="F:metal ion binding"/>
    <property type="evidence" value="ECO:0007669"/>
    <property type="project" value="UniProtKB-KW"/>
</dbReference>
<dbReference type="GO" id="GO:0008121">
    <property type="term" value="F:ubiquinol-cytochrome-c reductase activity"/>
    <property type="evidence" value="ECO:0007669"/>
    <property type="project" value="InterPro"/>
</dbReference>
<dbReference type="GO" id="GO:0006122">
    <property type="term" value="P:mitochondrial electron transport, ubiquinol to cytochrome c"/>
    <property type="evidence" value="ECO:0007669"/>
    <property type="project" value="TreeGrafter"/>
</dbReference>
<dbReference type="CDD" id="cd00290">
    <property type="entry name" value="cytochrome_b_C"/>
    <property type="match status" value="1"/>
</dbReference>
<dbReference type="CDD" id="cd00284">
    <property type="entry name" value="Cytochrome_b_N"/>
    <property type="match status" value="1"/>
</dbReference>
<dbReference type="FunFam" id="1.20.810.10:FF:000002">
    <property type="entry name" value="Cytochrome b"/>
    <property type="match status" value="1"/>
</dbReference>
<dbReference type="Gene3D" id="1.20.810.10">
    <property type="entry name" value="Cytochrome Bc1 Complex, Chain C"/>
    <property type="match status" value="1"/>
</dbReference>
<dbReference type="InterPro" id="IPR005798">
    <property type="entry name" value="Cyt_b/b6_C"/>
</dbReference>
<dbReference type="InterPro" id="IPR036150">
    <property type="entry name" value="Cyt_b/b6_C_sf"/>
</dbReference>
<dbReference type="InterPro" id="IPR005797">
    <property type="entry name" value="Cyt_b/b6_N"/>
</dbReference>
<dbReference type="InterPro" id="IPR027387">
    <property type="entry name" value="Cytb/b6-like_sf"/>
</dbReference>
<dbReference type="InterPro" id="IPR030689">
    <property type="entry name" value="Cytochrome_b"/>
</dbReference>
<dbReference type="InterPro" id="IPR048260">
    <property type="entry name" value="Cytochrome_b_C_euk/bac"/>
</dbReference>
<dbReference type="InterPro" id="IPR048259">
    <property type="entry name" value="Cytochrome_b_N_euk/bac"/>
</dbReference>
<dbReference type="InterPro" id="IPR016174">
    <property type="entry name" value="Di-haem_cyt_TM"/>
</dbReference>
<dbReference type="PANTHER" id="PTHR19271">
    <property type="entry name" value="CYTOCHROME B"/>
    <property type="match status" value="1"/>
</dbReference>
<dbReference type="PANTHER" id="PTHR19271:SF16">
    <property type="entry name" value="CYTOCHROME B"/>
    <property type="match status" value="1"/>
</dbReference>
<dbReference type="Pfam" id="PF00032">
    <property type="entry name" value="Cytochrom_B_C"/>
    <property type="match status" value="1"/>
</dbReference>
<dbReference type="Pfam" id="PF00033">
    <property type="entry name" value="Cytochrome_B"/>
    <property type="match status" value="1"/>
</dbReference>
<dbReference type="PIRSF" id="PIRSF038885">
    <property type="entry name" value="COB"/>
    <property type="match status" value="1"/>
</dbReference>
<dbReference type="SUPFAM" id="SSF81648">
    <property type="entry name" value="a domain/subunit of cytochrome bc1 complex (Ubiquinol-cytochrome c reductase)"/>
    <property type="match status" value="1"/>
</dbReference>
<dbReference type="SUPFAM" id="SSF81342">
    <property type="entry name" value="Transmembrane di-heme cytochromes"/>
    <property type="match status" value="1"/>
</dbReference>
<dbReference type="PROSITE" id="PS51003">
    <property type="entry name" value="CYTB_CTER"/>
    <property type="match status" value="1"/>
</dbReference>
<dbReference type="PROSITE" id="PS51002">
    <property type="entry name" value="CYTB_NTER"/>
    <property type="match status" value="1"/>
</dbReference>
<organism>
    <name type="scientific">Lepilemur septentrionalis</name>
    <name type="common">Northern sportive lemur</name>
    <dbReference type="NCBI Taxonomy" id="78584"/>
    <lineage>
        <taxon>Eukaryota</taxon>
        <taxon>Metazoa</taxon>
        <taxon>Chordata</taxon>
        <taxon>Craniata</taxon>
        <taxon>Vertebrata</taxon>
        <taxon>Euteleostomi</taxon>
        <taxon>Mammalia</taxon>
        <taxon>Eutheria</taxon>
        <taxon>Euarchontoglires</taxon>
        <taxon>Primates</taxon>
        <taxon>Strepsirrhini</taxon>
        <taxon>Lemuriformes</taxon>
        <taxon>Lepilemuridae</taxon>
        <taxon>Lepilemur</taxon>
    </lineage>
</organism>
<protein>
    <recommendedName>
        <fullName>Cytochrome b</fullName>
    </recommendedName>
    <alternativeName>
        <fullName>Complex III subunit 3</fullName>
    </alternativeName>
    <alternativeName>
        <fullName>Complex III subunit III</fullName>
    </alternativeName>
    <alternativeName>
        <fullName>Cytochrome b-c1 complex subunit 3</fullName>
    </alternativeName>
    <alternativeName>
        <fullName>Ubiquinol-cytochrome-c reductase complex cytochrome b subunit</fullName>
    </alternativeName>
</protein>